<proteinExistence type="predicted"/>
<reference key="1">
    <citation type="journal article" date="2003" name="Proc. Natl. Acad. Sci. U.S.A.">
        <title>The complete genome sequence of Mycobacterium bovis.</title>
        <authorList>
            <person name="Garnier T."/>
            <person name="Eiglmeier K."/>
            <person name="Camus J.-C."/>
            <person name="Medina N."/>
            <person name="Mansoor H."/>
            <person name="Pryor M."/>
            <person name="Duthoy S."/>
            <person name="Grondin S."/>
            <person name="Lacroix C."/>
            <person name="Monsempe C."/>
            <person name="Simon S."/>
            <person name="Harris B."/>
            <person name="Atkin R."/>
            <person name="Doggett J."/>
            <person name="Mayes R."/>
            <person name="Keating L."/>
            <person name="Wheeler P.R."/>
            <person name="Parkhill J."/>
            <person name="Barrell B.G."/>
            <person name="Cole S.T."/>
            <person name="Gordon S.V."/>
            <person name="Hewinson R.G."/>
        </authorList>
    </citation>
    <scope>NUCLEOTIDE SEQUENCE [LARGE SCALE GENOMIC DNA]</scope>
    <source>
        <strain>ATCC BAA-935 / AF2122/97</strain>
    </source>
</reference>
<reference key="2">
    <citation type="journal article" date="2017" name="Genome Announc.">
        <title>Updated reference genome sequence and annotation of Mycobacterium bovis AF2122/97.</title>
        <authorList>
            <person name="Malone K.M."/>
            <person name="Farrell D."/>
            <person name="Stuber T.P."/>
            <person name="Schubert O.T."/>
            <person name="Aebersold R."/>
            <person name="Robbe-Austerman S."/>
            <person name="Gordon S.V."/>
        </authorList>
    </citation>
    <scope>NUCLEOTIDE SEQUENCE [LARGE SCALE GENOMIC DNA]</scope>
    <scope>GENOME REANNOTATION</scope>
    <source>
        <strain>ATCC BAA-935 / AF2122/97</strain>
    </source>
</reference>
<gene>
    <name type="ordered locus">BQ2027_MB2677C</name>
</gene>
<accession>P65042</accession>
<accession>A0A1R3Y3V2</accession>
<accession>P71943</accession>
<accession>X2BLX4</accession>
<sequence length="105" mass="11629">MSPRRTSGGVVPVDRYRIDEGLIVVLVFAGRDERRRTVCFADKFGCVHIGNPDLYRPQTSLPQPLPISSHAISGSRFVETTNRADQQEPIGPNRAELFDQALHAG</sequence>
<organism>
    <name type="scientific">Mycobacterium bovis (strain ATCC BAA-935 / AF2122/97)</name>
    <dbReference type="NCBI Taxonomy" id="233413"/>
    <lineage>
        <taxon>Bacteria</taxon>
        <taxon>Bacillati</taxon>
        <taxon>Actinomycetota</taxon>
        <taxon>Actinomycetes</taxon>
        <taxon>Mycobacteriales</taxon>
        <taxon>Mycobacteriaceae</taxon>
        <taxon>Mycobacterium</taxon>
        <taxon>Mycobacterium tuberculosis complex</taxon>
    </lineage>
</organism>
<name>Y2677_MYCBO</name>
<protein>
    <recommendedName>
        <fullName>Uncharacterized protein Mb2677c</fullName>
    </recommendedName>
</protein>
<feature type="chain" id="PRO_0000104079" description="Uncharacterized protein Mb2677c">
    <location>
        <begin position="1"/>
        <end position="105"/>
    </location>
</feature>
<keyword id="KW-1185">Reference proteome</keyword>
<dbReference type="EMBL" id="LT708304">
    <property type="protein sequence ID" value="SIU01295.1"/>
    <property type="molecule type" value="Genomic_DNA"/>
</dbReference>
<dbReference type="RefSeq" id="NP_856323.1">
    <property type="nucleotide sequence ID" value="NC_002945.3"/>
</dbReference>
<dbReference type="KEGG" id="mbo:BQ2027_MB2677C"/>
<dbReference type="Proteomes" id="UP000001419">
    <property type="component" value="Chromosome"/>
</dbReference>